<proteinExistence type="inferred from homology"/>
<organism>
    <name type="scientific">Yersinia pestis</name>
    <dbReference type="NCBI Taxonomy" id="632"/>
    <lineage>
        <taxon>Bacteria</taxon>
        <taxon>Pseudomonadati</taxon>
        <taxon>Pseudomonadota</taxon>
        <taxon>Gammaproteobacteria</taxon>
        <taxon>Enterobacterales</taxon>
        <taxon>Yersiniaceae</taxon>
        <taxon>Yersinia</taxon>
    </lineage>
</organism>
<protein>
    <recommendedName>
        <fullName evidence="2">CTP synthase</fullName>
        <ecNumber evidence="2">6.3.4.2</ecNumber>
    </recommendedName>
    <alternativeName>
        <fullName evidence="2">Cytidine 5'-triphosphate synthase</fullName>
    </alternativeName>
    <alternativeName>
        <fullName evidence="2">Cytidine triphosphate synthetase</fullName>
        <shortName evidence="2">CTP synthetase</shortName>
        <shortName evidence="2">CTPS</shortName>
    </alternativeName>
    <alternativeName>
        <fullName evidence="2">UTP--ammonia ligase</fullName>
    </alternativeName>
</protein>
<feature type="initiator methionine" description="Removed" evidence="1">
    <location>
        <position position="1"/>
    </location>
</feature>
<feature type="chain" id="PRO_0000138255" description="CTP synthase">
    <location>
        <begin position="2"/>
        <end position="545"/>
    </location>
</feature>
<feature type="domain" description="Glutamine amidotransferase type-1" evidence="2">
    <location>
        <begin position="291"/>
        <end position="542"/>
    </location>
</feature>
<feature type="region of interest" description="Amidoligase domain" evidence="2">
    <location>
        <begin position="2"/>
        <end position="266"/>
    </location>
</feature>
<feature type="active site" description="Nucleophile; for glutamine hydrolysis" evidence="2">
    <location>
        <position position="379"/>
    </location>
</feature>
<feature type="active site" evidence="2">
    <location>
        <position position="515"/>
    </location>
</feature>
<feature type="active site" evidence="2">
    <location>
        <position position="517"/>
    </location>
</feature>
<feature type="binding site" evidence="2">
    <location>
        <position position="14"/>
    </location>
    <ligand>
        <name>CTP</name>
        <dbReference type="ChEBI" id="CHEBI:37563"/>
        <note>allosteric inhibitor</note>
    </ligand>
</feature>
<feature type="binding site" evidence="2">
    <location>
        <position position="14"/>
    </location>
    <ligand>
        <name>UTP</name>
        <dbReference type="ChEBI" id="CHEBI:46398"/>
    </ligand>
</feature>
<feature type="binding site" evidence="2">
    <location>
        <begin position="15"/>
        <end position="20"/>
    </location>
    <ligand>
        <name>ATP</name>
        <dbReference type="ChEBI" id="CHEBI:30616"/>
    </ligand>
</feature>
<feature type="binding site" evidence="2">
    <location>
        <position position="72"/>
    </location>
    <ligand>
        <name>ATP</name>
        <dbReference type="ChEBI" id="CHEBI:30616"/>
    </ligand>
</feature>
<feature type="binding site" evidence="2">
    <location>
        <position position="72"/>
    </location>
    <ligand>
        <name>Mg(2+)</name>
        <dbReference type="ChEBI" id="CHEBI:18420"/>
    </ligand>
</feature>
<feature type="binding site" evidence="2">
    <location>
        <position position="140"/>
    </location>
    <ligand>
        <name>Mg(2+)</name>
        <dbReference type="ChEBI" id="CHEBI:18420"/>
    </ligand>
</feature>
<feature type="binding site" evidence="2">
    <location>
        <begin position="147"/>
        <end position="149"/>
    </location>
    <ligand>
        <name>CTP</name>
        <dbReference type="ChEBI" id="CHEBI:37563"/>
        <note>allosteric inhibitor</note>
    </ligand>
</feature>
<feature type="binding site" evidence="2">
    <location>
        <begin position="187"/>
        <end position="192"/>
    </location>
    <ligand>
        <name>CTP</name>
        <dbReference type="ChEBI" id="CHEBI:37563"/>
        <note>allosteric inhibitor</note>
    </ligand>
</feature>
<feature type="binding site" evidence="2">
    <location>
        <begin position="187"/>
        <end position="192"/>
    </location>
    <ligand>
        <name>UTP</name>
        <dbReference type="ChEBI" id="CHEBI:46398"/>
    </ligand>
</feature>
<feature type="binding site" evidence="2">
    <location>
        <position position="223"/>
    </location>
    <ligand>
        <name>CTP</name>
        <dbReference type="ChEBI" id="CHEBI:37563"/>
        <note>allosteric inhibitor</note>
    </ligand>
</feature>
<feature type="binding site" evidence="2">
    <location>
        <position position="223"/>
    </location>
    <ligand>
        <name>UTP</name>
        <dbReference type="ChEBI" id="CHEBI:46398"/>
    </ligand>
</feature>
<feature type="binding site" evidence="2">
    <location>
        <begin position="239"/>
        <end position="241"/>
    </location>
    <ligand>
        <name>ATP</name>
        <dbReference type="ChEBI" id="CHEBI:30616"/>
    </ligand>
</feature>
<feature type="binding site" evidence="2">
    <location>
        <position position="352"/>
    </location>
    <ligand>
        <name>L-glutamine</name>
        <dbReference type="ChEBI" id="CHEBI:58359"/>
    </ligand>
</feature>
<feature type="binding site" evidence="2">
    <location>
        <begin position="380"/>
        <end position="383"/>
    </location>
    <ligand>
        <name>L-glutamine</name>
        <dbReference type="ChEBI" id="CHEBI:58359"/>
    </ligand>
</feature>
<feature type="binding site" evidence="2">
    <location>
        <position position="403"/>
    </location>
    <ligand>
        <name>L-glutamine</name>
        <dbReference type="ChEBI" id="CHEBI:58359"/>
    </ligand>
</feature>
<feature type="binding site" evidence="2">
    <location>
        <position position="470"/>
    </location>
    <ligand>
        <name>L-glutamine</name>
        <dbReference type="ChEBI" id="CHEBI:58359"/>
    </ligand>
</feature>
<reference key="1">
    <citation type="journal article" date="2001" name="Nature">
        <title>Genome sequence of Yersinia pestis, the causative agent of plague.</title>
        <authorList>
            <person name="Parkhill J."/>
            <person name="Wren B.W."/>
            <person name="Thomson N.R."/>
            <person name="Titball R.W."/>
            <person name="Holden M.T.G."/>
            <person name="Prentice M.B."/>
            <person name="Sebaihia M."/>
            <person name="James K.D."/>
            <person name="Churcher C.M."/>
            <person name="Mungall K.L."/>
            <person name="Baker S."/>
            <person name="Basham D."/>
            <person name="Bentley S.D."/>
            <person name="Brooks K."/>
            <person name="Cerdeno-Tarraga A.-M."/>
            <person name="Chillingworth T."/>
            <person name="Cronin A."/>
            <person name="Davies R.M."/>
            <person name="Davis P."/>
            <person name="Dougan G."/>
            <person name="Feltwell T."/>
            <person name="Hamlin N."/>
            <person name="Holroyd S."/>
            <person name="Jagels K."/>
            <person name="Karlyshev A.V."/>
            <person name="Leather S."/>
            <person name="Moule S."/>
            <person name="Oyston P.C.F."/>
            <person name="Quail M.A."/>
            <person name="Rutherford K.M."/>
            <person name="Simmonds M."/>
            <person name="Skelton J."/>
            <person name="Stevens K."/>
            <person name="Whitehead S."/>
            <person name="Barrell B.G."/>
        </authorList>
    </citation>
    <scope>NUCLEOTIDE SEQUENCE [LARGE SCALE GENOMIC DNA]</scope>
    <source>
        <strain>CO-92 / Biovar Orientalis</strain>
    </source>
</reference>
<reference key="2">
    <citation type="journal article" date="2002" name="J. Bacteriol.">
        <title>Genome sequence of Yersinia pestis KIM.</title>
        <authorList>
            <person name="Deng W."/>
            <person name="Burland V."/>
            <person name="Plunkett G. III"/>
            <person name="Boutin A."/>
            <person name="Mayhew G.F."/>
            <person name="Liss P."/>
            <person name="Perna N.T."/>
            <person name="Rose D.J."/>
            <person name="Mau B."/>
            <person name="Zhou S."/>
            <person name="Schwartz D.C."/>
            <person name="Fetherston J.D."/>
            <person name="Lindler L.E."/>
            <person name="Brubaker R.R."/>
            <person name="Plano G.V."/>
            <person name="Straley S.C."/>
            <person name="McDonough K.A."/>
            <person name="Nilles M.L."/>
            <person name="Matson J.S."/>
            <person name="Blattner F.R."/>
            <person name="Perry R.D."/>
        </authorList>
    </citation>
    <scope>NUCLEOTIDE SEQUENCE [LARGE SCALE GENOMIC DNA]</scope>
    <source>
        <strain>KIM10+ / Biovar Mediaevalis</strain>
    </source>
</reference>
<reference key="3">
    <citation type="journal article" date="2004" name="DNA Res.">
        <title>Complete genome sequence of Yersinia pestis strain 91001, an isolate avirulent to humans.</title>
        <authorList>
            <person name="Song Y."/>
            <person name="Tong Z."/>
            <person name="Wang J."/>
            <person name="Wang L."/>
            <person name="Guo Z."/>
            <person name="Han Y."/>
            <person name="Zhang J."/>
            <person name="Pei D."/>
            <person name="Zhou D."/>
            <person name="Qin H."/>
            <person name="Pang X."/>
            <person name="Han Y."/>
            <person name="Zhai J."/>
            <person name="Li M."/>
            <person name="Cui B."/>
            <person name="Qi Z."/>
            <person name="Jin L."/>
            <person name="Dai R."/>
            <person name="Chen F."/>
            <person name="Li S."/>
            <person name="Ye C."/>
            <person name="Du Z."/>
            <person name="Lin W."/>
            <person name="Wang J."/>
            <person name="Yu J."/>
            <person name="Yang H."/>
            <person name="Wang J."/>
            <person name="Huang P."/>
            <person name="Yang R."/>
        </authorList>
    </citation>
    <scope>NUCLEOTIDE SEQUENCE [LARGE SCALE GENOMIC DNA]</scope>
    <source>
        <strain>91001 / Biovar Mediaevalis</strain>
    </source>
</reference>
<name>PYRG_YERPE</name>
<comment type="function">
    <text evidence="2">Catalyzes the ATP-dependent amination of UTP to CTP with either L-glutamine or ammonia as the source of nitrogen. Regulates intracellular CTP levels through interactions with the four ribonucleotide triphosphates.</text>
</comment>
<comment type="catalytic activity">
    <reaction evidence="2">
        <text>UTP + L-glutamine + ATP + H2O = CTP + L-glutamate + ADP + phosphate + 2 H(+)</text>
        <dbReference type="Rhea" id="RHEA:26426"/>
        <dbReference type="ChEBI" id="CHEBI:15377"/>
        <dbReference type="ChEBI" id="CHEBI:15378"/>
        <dbReference type="ChEBI" id="CHEBI:29985"/>
        <dbReference type="ChEBI" id="CHEBI:30616"/>
        <dbReference type="ChEBI" id="CHEBI:37563"/>
        <dbReference type="ChEBI" id="CHEBI:43474"/>
        <dbReference type="ChEBI" id="CHEBI:46398"/>
        <dbReference type="ChEBI" id="CHEBI:58359"/>
        <dbReference type="ChEBI" id="CHEBI:456216"/>
        <dbReference type="EC" id="6.3.4.2"/>
    </reaction>
</comment>
<comment type="catalytic activity">
    <reaction evidence="2">
        <text>L-glutamine + H2O = L-glutamate + NH4(+)</text>
        <dbReference type="Rhea" id="RHEA:15889"/>
        <dbReference type="ChEBI" id="CHEBI:15377"/>
        <dbReference type="ChEBI" id="CHEBI:28938"/>
        <dbReference type="ChEBI" id="CHEBI:29985"/>
        <dbReference type="ChEBI" id="CHEBI:58359"/>
    </reaction>
</comment>
<comment type="catalytic activity">
    <reaction evidence="2">
        <text>UTP + NH4(+) + ATP = CTP + ADP + phosphate + 2 H(+)</text>
        <dbReference type="Rhea" id="RHEA:16597"/>
        <dbReference type="ChEBI" id="CHEBI:15378"/>
        <dbReference type="ChEBI" id="CHEBI:28938"/>
        <dbReference type="ChEBI" id="CHEBI:30616"/>
        <dbReference type="ChEBI" id="CHEBI:37563"/>
        <dbReference type="ChEBI" id="CHEBI:43474"/>
        <dbReference type="ChEBI" id="CHEBI:46398"/>
        <dbReference type="ChEBI" id="CHEBI:456216"/>
    </reaction>
</comment>
<comment type="activity regulation">
    <text evidence="2">Allosterically activated by GTP, when glutamine is the substrate; GTP has no effect on the reaction when ammonia is the substrate. The allosteric effector GTP functions by stabilizing the protein conformation that binds the tetrahedral intermediate(s) formed during glutamine hydrolysis. Inhibited by the product CTP, via allosteric rather than competitive inhibition.</text>
</comment>
<comment type="pathway">
    <text evidence="2">Pyrimidine metabolism; CTP biosynthesis via de novo pathway; CTP from UDP: step 2/2.</text>
</comment>
<comment type="subunit">
    <text evidence="2">Homotetramer.</text>
</comment>
<comment type="miscellaneous">
    <text evidence="2">CTPSs have evolved a hybrid strategy for distinguishing between UTP and CTP. The overlapping regions of the product feedback inhibitory and substrate sites recognize a common feature in both compounds, the triphosphate moiety. To differentiate isosteric substrate and product pyrimidine rings, an additional pocket far from the expected kinase/ligase catalytic site, specifically recognizes the cytosine and ribose portions of the product inhibitor.</text>
</comment>
<comment type="similarity">
    <text evidence="2">Belongs to the CTP synthase family.</text>
</comment>
<accession>Q8ZBN1</accession>
<accession>Q0WBR9</accession>
<gene>
    <name evidence="2" type="primary">pyrG</name>
    <name type="ordered locus">YPO3377</name>
    <name type="ordered locus">y0813</name>
    <name type="ordered locus">YP_0309</name>
</gene>
<dbReference type="EC" id="6.3.4.2" evidence="2"/>
<dbReference type="EMBL" id="AL590842">
    <property type="protein sequence ID" value="CAL21966.1"/>
    <property type="molecule type" value="Genomic_DNA"/>
</dbReference>
<dbReference type="EMBL" id="AE009952">
    <property type="protein sequence ID" value="AAM84400.1"/>
    <property type="molecule type" value="Genomic_DNA"/>
</dbReference>
<dbReference type="EMBL" id="AE017042">
    <property type="protein sequence ID" value="AAS60584.1"/>
    <property type="molecule type" value="Genomic_DNA"/>
</dbReference>
<dbReference type="PIR" id="AC0410">
    <property type="entry name" value="AC0410"/>
</dbReference>
<dbReference type="RefSeq" id="WP_002209376.1">
    <property type="nucleotide sequence ID" value="NZ_WUCM01000008.1"/>
</dbReference>
<dbReference type="RefSeq" id="YP_002348269.1">
    <property type="nucleotide sequence ID" value="NC_003143.1"/>
</dbReference>
<dbReference type="SMR" id="Q8ZBN1"/>
<dbReference type="STRING" id="214092.YPO3377"/>
<dbReference type="MEROPS" id="C26.964"/>
<dbReference type="PaxDb" id="214092-YPO3377"/>
<dbReference type="DNASU" id="1145760"/>
<dbReference type="EnsemblBacteria" id="AAS60584">
    <property type="protein sequence ID" value="AAS60584"/>
    <property type="gene ID" value="YP_0309"/>
</dbReference>
<dbReference type="GeneID" id="96664251"/>
<dbReference type="KEGG" id="ype:YPO3377"/>
<dbReference type="KEGG" id="ypk:y0813"/>
<dbReference type="KEGG" id="ypm:YP_0309"/>
<dbReference type="PATRIC" id="fig|214092.21.peg.3857"/>
<dbReference type="eggNOG" id="COG0504">
    <property type="taxonomic scope" value="Bacteria"/>
</dbReference>
<dbReference type="HOGENOM" id="CLU_011675_5_0_6"/>
<dbReference type="OMA" id="EFNNAYR"/>
<dbReference type="OrthoDB" id="9801107at2"/>
<dbReference type="UniPathway" id="UPA00159">
    <property type="reaction ID" value="UER00277"/>
</dbReference>
<dbReference type="Proteomes" id="UP000000815">
    <property type="component" value="Chromosome"/>
</dbReference>
<dbReference type="Proteomes" id="UP000001019">
    <property type="component" value="Chromosome"/>
</dbReference>
<dbReference type="Proteomes" id="UP000002490">
    <property type="component" value="Chromosome"/>
</dbReference>
<dbReference type="GO" id="GO:0005829">
    <property type="term" value="C:cytosol"/>
    <property type="evidence" value="ECO:0000318"/>
    <property type="project" value="GO_Central"/>
</dbReference>
<dbReference type="GO" id="GO:0005524">
    <property type="term" value="F:ATP binding"/>
    <property type="evidence" value="ECO:0007669"/>
    <property type="project" value="UniProtKB-KW"/>
</dbReference>
<dbReference type="GO" id="GO:0003883">
    <property type="term" value="F:CTP synthase activity"/>
    <property type="evidence" value="ECO:0000318"/>
    <property type="project" value="GO_Central"/>
</dbReference>
<dbReference type="GO" id="GO:0004359">
    <property type="term" value="F:glutaminase activity"/>
    <property type="evidence" value="ECO:0007669"/>
    <property type="project" value="RHEA"/>
</dbReference>
<dbReference type="GO" id="GO:0042802">
    <property type="term" value="F:identical protein binding"/>
    <property type="evidence" value="ECO:0000318"/>
    <property type="project" value="GO_Central"/>
</dbReference>
<dbReference type="GO" id="GO:0046872">
    <property type="term" value="F:metal ion binding"/>
    <property type="evidence" value="ECO:0007669"/>
    <property type="project" value="UniProtKB-KW"/>
</dbReference>
<dbReference type="GO" id="GO:0044210">
    <property type="term" value="P:'de novo' CTP biosynthetic process"/>
    <property type="evidence" value="ECO:0007669"/>
    <property type="project" value="UniProtKB-UniRule"/>
</dbReference>
<dbReference type="GO" id="GO:0006241">
    <property type="term" value="P:CTP biosynthetic process"/>
    <property type="evidence" value="ECO:0000318"/>
    <property type="project" value="GO_Central"/>
</dbReference>
<dbReference type="GO" id="GO:0019856">
    <property type="term" value="P:pyrimidine nucleobase biosynthetic process"/>
    <property type="evidence" value="ECO:0000318"/>
    <property type="project" value="GO_Central"/>
</dbReference>
<dbReference type="CDD" id="cd03113">
    <property type="entry name" value="CTPS_N"/>
    <property type="match status" value="1"/>
</dbReference>
<dbReference type="CDD" id="cd01746">
    <property type="entry name" value="GATase1_CTP_Synthase"/>
    <property type="match status" value="1"/>
</dbReference>
<dbReference type="FunFam" id="3.40.50.300:FF:000009">
    <property type="entry name" value="CTP synthase"/>
    <property type="match status" value="1"/>
</dbReference>
<dbReference type="FunFam" id="3.40.50.880:FF:000002">
    <property type="entry name" value="CTP synthase"/>
    <property type="match status" value="1"/>
</dbReference>
<dbReference type="Gene3D" id="3.40.50.880">
    <property type="match status" value="1"/>
</dbReference>
<dbReference type="Gene3D" id="3.40.50.300">
    <property type="entry name" value="P-loop containing nucleotide triphosphate hydrolases"/>
    <property type="match status" value="1"/>
</dbReference>
<dbReference type="HAMAP" id="MF_01227">
    <property type="entry name" value="PyrG"/>
    <property type="match status" value="1"/>
</dbReference>
<dbReference type="InterPro" id="IPR029062">
    <property type="entry name" value="Class_I_gatase-like"/>
</dbReference>
<dbReference type="InterPro" id="IPR004468">
    <property type="entry name" value="CTP_synthase"/>
</dbReference>
<dbReference type="InterPro" id="IPR017456">
    <property type="entry name" value="CTP_synthase_N"/>
</dbReference>
<dbReference type="InterPro" id="IPR017926">
    <property type="entry name" value="GATASE"/>
</dbReference>
<dbReference type="InterPro" id="IPR033828">
    <property type="entry name" value="GATase1_CTP_Synthase"/>
</dbReference>
<dbReference type="InterPro" id="IPR027417">
    <property type="entry name" value="P-loop_NTPase"/>
</dbReference>
<dbReference type="NCBIfam" id="NF003792">
    <property type="entry name" value="PRK05380.1"/>
    <property type="match status" value="1"/>
</dbReference>
<dbReference type="NCBIfam" id="TIGR00337">
    <property type="entry name" value="PyrG"/>
    <property type="match status" value="1"/>
</dbReference>
<dbReference type="PANTHER" id="PTHR11550">
    <property type="entry name" value="CTP SYNTHASE"/>
    <property type="match status" value="1"/>
</dbReference>
<dbReference type="PANTHER" id="PTHR11550:SF0">
    <property type="entry name" value="CTP SYNTHASE-RELATED"/>
    <property type="match status" value="1"/>
</dbReference>
<dbReference type="Pfam" id="PF06418">
    <property type="entry name" value="CTP_synth_N"/>
    <property type="match status" value="1"/>
</dbReference>
<dbReference type="Pfam" id="PF00117">
    <property type="entry name" value="GATase"/>
    <property type="match status" value="1"/>
</dbReference>
<dbReference type="SUPFAM" id="SSF52317">
    <property type="entry name" value="Class I glutamine amidotransferase-like"/>
    <property type="match status" value="1"/>
</dbReference>
<dbReference type="SUPFAM" id="SSF52540">
    <property type="entry name" value="P-loop containing nucleoside triphosphate hydrolases"/>
    <property type="match status" value="1"/>
</dbReference>
<dbReference type="PROSITE" id="PS51273">
    <property type="entry name" value="GATASE_TYPE_1"/>
    <property type="match status" value="1"/>
</dbReference>
<keyword id="KW-0067">ATP-binding</keyword>
<keyword id="KW-0315">Glutamine amidotransferase</keyword>
<keyword id="KW-0436">Ligase</keyword>
<keyword id="KW-0460">Magnesium</keyword>
<keyword id="KW-0479">Metal-binding</keyword>
<keyword id="KW-0547">Nucleotide-binding</keyword>
<keyword id="KW-0665">Pyrimidine biosynthesis</keyword>
<keyword id="KW-1185">Reference proteome</keyword>
<sequence length="545" mass="60363">MTTNYIFVTGGVVSSLGKGIAAASLAAILEARGLNVTIMKLDPYINVDPGTMSPTQHGEVFVTEDGAETDLDLGHYERFIRTKMTRRNNFTTGRIYSEVLRKERRGDYLGATIQVIPHITNAIKERIIEGGEGHDVVLVEIGGTVGDIESLPFLEAIRQMAVDVGREHTLYMHLTLVPYLAAAGEVKTKPTQHSVKELLSIGIQPDVLICRSDRAVPANERAKIALFCNVPEKAVISLKDVDSIYKIPGLLKSQGLDDYICKRFSLTCPEANLAEWEQVLYEESNPGGEVTIGMIGKYVELPDAYKSVIEALKHGGLKNRLTVNIKLIDSQDVETRGEEMLKELDAILIPGGFGYRGVEGKVLAARYAREHNIPYLGICLGMQVALMEFARNVAGMENANSTEFVPDCKYPVVALITEWRDEDGNVEIRTEESDLGGTMRVGGQQCHLTEGSLVRQMYGEPTIVERHRHRYEVNNMLLKQIEAAGLRVAGRSADNKLVEIIELPDHPWFVACQFHPEFTSTPRDGHPLFAGFVKAAGDYQKRQVK</sequence>
<evidence type="ECO:0000250" key="1"/>
<evidence type="ECO:0000255" key="2">
    <source>
        <dbReference type="HAMAP-Rule" id="MF_01227"/>
    </source>
</evidence>